<reference key="1">
    <citation type="submission" date="2008-05" db="EMBL/GenBank/DDBJ databases">
        <title>Genome sequence of Helicobacter pylori from the remote Amazon: traces of Asian ancestry of the first Americans.</title>
        <authorList>
            <person name="Kersulyte D."/>
            <person name="Kalia A."/>
            <person name="Gilman R.H."/>
            <person name="Berg D.E."/>
        </authorList>
    </citation>
    <scope>NUCLEOTIDE SEQUENCE [LARGE SCALE GENOMIC DNA]</scope>
    <source>
        <strain>Shi470</strain>
    </source>
</reference>
<sequence length="330" mass="36579">MALPVYYDKDIDLGVIQSLQVGIIGYGAQGEAQALNLRDSKVKVRIGLYQGSLSVPKAKAEGFEVLEVKELVQQSDLIMALLPDELHKEVLEKEVIPFLKEGQIVGFAHGFSVHFNQVVLPKGVGAILVAPKGPGSALREEYLKNRGLYHLIAIEQESSKNNAKAVALSYAKAMGGGRMGVLETSFKEECESDLFGEQAVLCGGLEAIIRMGFETLIKAGYPEELAYFECVHEVKLVADLLHYKGVEGLRKHISNTAEFGAIKNREPMGNLLEKRMQKILKKIQNGSFAKDFLLEKSLNYPRLNTERKALKETKIEQIGEILRAPFNHKK</sequence>
<feature type="chain" id="PRO_1000124297" description="Ketol-acid reductoisomerase (NADP(+))">
    <location>
        <begin position="1"/>
        <end position="330"/>
    </location>
</feature>
<feature type="domain" description="KARI N-terminal Rossmann" evidence="2">
    <location>
        <begin position="3"/>
        <end position="184"/>
    </location>
</feature>
<feature type="domain" description="KARI C-terminal knotted" evidence="3">
    <location>
        <begin position="185"/>
        <end position="329"/>
    </location>
</feature>
<feature type="active site" evidence="1">
    <location>
        <position position="109"/>
    </location>
</feature>
<feature type="binding site" evidence="1">
    <location>
        <begin position="26"/>
        <end position="29"/>
    </location>
    <ligand>
        <name>NADP(+)</name>
        <dbReference type="ChEBI" id="CHEBI:58349"/>
    </ligand>
</feature>
<feature type="binding site" evidence="1">
    <location>
        <position position="52"/>
    </location>
    <ligand>
        <name>NADP(+)</name>
        <dbReference type="ChEBI" id="CHEBI:58349"/>
    </ligand>
</feature>
<feature type="binding site" evidence="1">
    <location>
        <position position="54"/>
    </location>
    <ligand>
        <name>NADP(+)</name>
        <dbReference type="ChEBI" id="CHEBI:58349"/>
    </ligand>
</feature>
<feature type="binding site" evidence="1">
    <location>
        <position position="135"/>
    </location>
    <ligand>
        <name>NADP(+)</name>
        <dbReference type="ChEBI" id="CHEBI:58349"/>
    </ligand>
</feature>
<feature type="binding site" evidence="1">
    <location>
        <position position="193"/>
    </location>
    <ligand>
        <name>Mg(2+)</name>
        <dbReference type="ChEBI" id="CHEBI:18420"/>
        <label>1</label>
    </ligand>
</feature>
<feature type="binding site" evidence="1">
    <location>
        <position position="193"/>
    </location>
    <ligand>
        <name>Mg(2+)</name>
        <dbReference type="ChEBI" id="CHEBI:18420"/>
        <label>2</label>
    </ligand>
</feature>
<feature type="binding site" evidence="1">
    <location>
        <position position="197"/>
    </location>
    <ligand>
        <name>Mg(2+)</name>
        <dbReference type="ChEBI" id="CHEBI:18420"/>
        <label>1</label>
    </ligand>
</feature>
<feature type="binding site" evidence="1">
    <location>
        <position position="229"/>
    </location>
    <ligand>
        <name>Mg(2+)</name>
        <dbReference type="ChEBI" id="CHEBI:18420"/>
        <label>2</label>
    </ligand>
</feature>
<feature type="binding site" evidence="1">
    <location>
        <position position="233"/>
    </location>
    <ligand>
        <name>Mg(2+)</name>
        <dbReference type="ChEBI" id="CHEBI:18420"/>
        <label>2</label>
    </ligand>
</feature>
<feature type="binding site" evidence="1">
    <location>
        <position position="254"/>
    </location>
    <ligand>
        <name>substrate</name>
    </ligand>
</feature>
<organism>
    <name type="scientific">Helicobacter pylori (strain Shi470)</name>
    <dbReference type="NCBI Taxonomy" id="512562"/>
    <lineage>
        <taxon>Bacteria</taxon>
        <taxon>Pseudomonadati</taxon>
        <taxon>Campylobacterota</taxon>
        <taxon>Epsilonproteobacteria</taxon>
        <taxon>Campylobacterales</taxon>
        <taxon>Helicobacteraceae</taxon>
        <taxon>Helicobacter</taxon>
    </lineage>
</organism>
<evidence type="ECO:0000255" key="1">
    <source>
        <dbReference type="HAMAP-Rule" id="MF_00435"/>
    </source>
</evidence>
<evidence type="ECO:0000255" key="2">
    <source>
        <dbReference type="PROSITE-ProRule" id="PRU01197"/>
    </source>
</evidence>
<evidence type="ECO:0000255" key="3">
    <source>
        <dbReference type="PROSITE-ProRule" id="PRU01198"/>
    </source>
</evidence>
<comment type="function">
    <text evidence="1">Involved in the biosynthesis of branched-chain amino acids (BCAA). Catalyzes an alkyl-migration followed by a ketol-acid reduction of (S)-2-acetolactate (S2AL) to yield (R)-2,3-dihydroxy-isovalerate. In the isomerase reaction, S2AL is rearranged via a Mg-dependent methyl migration to produce 3-hydroxy-3-methyl-2-ketobutyrate (HMKB). In the reductase reaction, this 2-ketoacid undergoes a metal-dependent reduction by NADPH to yield (R)-2,3-dihydroxy-isovalerate.</text>
</comment>
<comment type="catalytic activity">
    <reaction evidence="1">
        <text>(2R)-2,3-dihydroxy-3-methylbutanoate + NADP(+) = (2S)-2-acetolactate + NADPH + H(+)</text>
        <dbReference type="Rhea" id="RHEA:22068"/>
        <dbReference type="ChEBI" id="CHEBI:15378"/>
        <dbReference type="ChEBI" id="CHEBI:49072"/>
        <dbReference type="ChEBI" id="CHEBI:57783"/>
        <dbReference type="ChEBI" id="CHEBI:58349"/>
        <dbReference type="ChEBI" id="CHEBI:58476"/>
        <dbReference type="EC" id="1.1.1.86"/>
    </reaction>
</comment>
<comment type="catalytic activity">
    <reaction evidence="1">
        <text>(2R,3R)-2,3-dihydroxy-3-methylpentanoate + NADP(+) = (S)-2-ethyl-2-hydroxy-3-oxobutanoate + NADPH + H(+)</text>
        <dbReference type="Rhea" id="RHEA:13493"/>
        <dbReference type="ChEBI" id="CHEBI:15378"/>
        <dbReference type="ChEBI" id="CHEBI:49256"/>
        <dbReference type="ChEBI" id="CHEBI:49258"/>
        <dbReference type="ChEBI" id="CHEBI:57783"/>
        <dbReference type="ChEBI" id="CHEBI:58349"/>
        <dbReference type="EC" id="1.1.1.86"/>
    </reaction>
</comment>
<comment type="cofactor">
    <cofactor evidence="1">
        <name>Mg(2+)</name>
        <dbReference type="ChEBI" id="CHEBI:18420"/>
    </cofactor>
    <text evidence="1">Binds 2 magnesium ions per subunit.</text>
</comment>
<comment type="pathway">
    <text evidence="1">Amino-acid biosynthesis; L-isoleucine biosynthesis; L-isoleucine from 2-oxobutanoate: step 2/4.</text>
</comment>
<comment type="pathway">
    <text evidence="1">Amino-acid biosynthesis; L-valine biosynthesis; L-valine from pyruvate: step 2/4.</text>
</comment>
<comment type="similarity">
    <text evidence="1">Belongs to the ketol-acid reductoisomerase family.</text>
</comment>
<name>ILVC_HELPS</name>
<keyword id="KW-0028">Amino-acid biosynthesis</keyword>
<keyword id="KW-0100">Branched-chain amino acid biosynthesis</keyword>
<keyword id="KW-0460">Magnesium</keyword>
<keyword id="KW-0479">Metal-binding</keyword>
<keyword id="KW-0521">NADP</keyword>
<keyword id="KW-0560">Oxidoreductase</keyword>
<protein>
    <recommendedName>
        <fullName evidence="1">Ketol-acid reductoisomerase (NADP(+))</fullName>
        <shortName evidence="1">KARI</shortName>
        <ecNumber evidence="1">1.1.1.86</ecNumber>
    </recommendedName>
    <alternativeName>
        <fullName evidence="1">Acetohydroxy-acid isomeroreductase</fullName>
        <shortName evidence="1">AHIR</shortName>
    </alternativeName>
    <alternativeName>
        <fullName evidence="1">Alpha-keto-beta-hydroxylacyl reductoisomerase</fullName>
    </alternativeName>
    <alternativeName>
        <fullName evidence="1">Ketol-acid reductoisomerase type 1</fullName>
    </alternativeName>
    <alternativeName>
        <fullName evidence="1">Ketol-acid reductoisomerase type I</fullName>
    </alternativeName>
</protein>
<gene>
    <name evidence="1" type="primary">ilvC</name>
    <name type="ordered locus">HPSH_01715</name>
</gene>
<proteinExistence type="inferred from homology"/>
<accession>B2USG1</accession>
<dbReference type="EC" id="1.1.1.86" evidence="1"/>
<dbReference type="EMBL" id="CP001072">
    <property type="protein sequence ID" value="ACD47793.1"/>
    <property type="molecule type" value="Genomic_DNA"/>
</dbReference>
<dbReference type="RefSeq" id="WP_001207745.1">
    <property type="nucleotide sequence ID" value="NC_010698.2"/>
</dbReference>
<dbReference type="SMR" id="B2USG1"/>
<dbReference type="KEGG" id="hps:HPSH_01715"/>
<dbReference type="HOGENOM" id="CLU_033821_0_1_7"/>
<dbReference type="UniPathway" id="UPA00047">
    <property type="reaction ID" value="UER00056"/>
</dbReference>
<dbReference type="UniPathway" id="UPA00049">
    <property type="reaction ID" value="UER00060"/>
</dbReference>
<dbReference type="GO" id="GO:0005829">
    <property type="term" value="C:cytosol"/>
    <property type="evidence" value="ECO:0007669"/>
    <property type="project" value="TreeGrafter"/>
</dbReference>
<dbReference type="GO" id="GO:0004455">
    <property type="term" value="F:ketol-acid reductoisomerase activity"/>
    <property type="evidence" value="ECO:0007669"/>
    <property type="project" value="UniProtKB-UniRule"/>
</dbReference>
<dbReference type="GO" id="GO:0000287">
    <property type="term" value="F:magnesium ion binding"/>
    <property type="evidence" value="ECO:0007669"/>
    <property type="project" value="UniProtKB-UniRule"/>
</dbReference>
<dbReference type="GO" id="GO:0050661">
    <property type="term" value="F:NADP binding"/>
    <property type="evidence" value="ECO:0007669"/>
    <property type="project" value="InterPro"/>
</dbReference>
<dbReference type="GO" id="GO:0009097">
    <property type="term" value="P:isoleucine biosynthetic process"/>
    <property type="evidence" value="ECO:0007669"/>
    <property type="project" value="UniProtKB-UniRule"/>
</dbReference>
<dbReference type="GO" id="GO:0009099">
    <property type="term" value="P:L-valine biosynthetic process"/>
    <property type="evidence" value="ECO:0007669"/>
    <property type="project" value="UniProtKB-UniRule"/>
</dbReference>
<dbReference type="Gene3D" id="6.10.240.10">
    <property type="match status" value="1"/>
</dbReference>
<dbReference type="Gene3D" id="3.40.50.720">
    <property type="entry name" value="NAD(P)-binding Rossmann-like Domain"/>
    <property type="match status" value="1"/>
</dbReference>
<dbReference type="HAMAP" id="MF_00435">
    <property type="entry name" value="IlvC"/>
    <property type="match status" value="1"/>
</dbReference>
<dbReference type="InterPro" id="IPR008927">
    <property type="entry name" value="6-PGluconate_DH-like_C_sf"/>
</dbReference>
<dbReference type="InterPro" id="IPR013023">
    <property type="entry name" value="KARI"/>
</dbReference>
<dbReference type="InterPro" id="IPR000506">
    <property type="entry name" value="KARI_C"/>
</dbReference>
<dbReference type="InterPro" id="IPR013116">
    <property type="entry name" value="KARI_N"/>
</dbReference>
<dbReference type="InterPro" id="IPR014359">
    <property type="entry name" value="KARI_prok"/>
</dbReference>
<dbReference type="InterPro" id="IPR036291">
    <property type="entry name" value="NAD(P)-bd_dom_sf"/>
</dbReference>
<dbReference type="NCBIfam" id="TIGR00465">
    <property type="entry name" value="ilvC"/>
    <property type="match status" value="1"/>
</dbReference>
<dbReference type="NCBIfam" id="NF004017">
    <property type="entry name" value="PRK05479.1"/>
    <property type="match status" value="1"/>
</dbReference>
<dbReference type="PANTHER" id="PTHR21371">
    <property type="entry name" value="KETOL-ACID REDUCTOISOMERASE, MITOCHONDRIAL"/>
    <property type="match status" value="1"/>
</dbReference>
<dbReference type="PANTHER" id="PTHR21371:SF1">
    <property type="entry name" value="KETOL-ACID REDUCTOISOMERASE, MITOCHONDRIAL"/>
    <property type="match status" value="1"/>
</dbReference>
<dbReference type="Pfam" id="PF01450">
    <property type="entry name" value="KARI_C"/>
    <property type="match status" value="1"/>
</dbReference>
<dbReference type="Pfam" id="PF07991">
    <property type="entry name" value="KARI_N"/>
    <property type="match status" value="1"/>
</dbReference>
<dbReference type="PIRSF" id="PIRSF000116">
    <property type="entry name" value="IlvC_gammaproteo"/>
    <property type="match status" value="1"/>
</dbReference>
<dbReference type="SUPFAM" id="SSF48179">
    <property type="entry name" value="6-phosphogluconate dehydrogenase C-terminal domain-like"/>
    <property type="match status" value="1"/>
</dbReference>
<dbReference type="SUPFAM" id="SSF51735">
    <property type="entry name" value="NAD(P)-binding Rossmann-fold domains"/>
    <property type="match status" value="1"/>
</dbReference>
<dbReference type="PROSITE" id="PS51851">
    <property type="entry name" value="KARI_C"/>
    <property type="match status" value="1"/>
</dbReference>
<dbReference type="PROSITE" id="PS51850">
    <property type="entry name" value="KARI_N"/>
    <property type="match status" value="1"/>
</dbReference>